<protein>
    <recommendedName>
        <fullName>Putative uncharacterized protein DDB_G0271804</fullName>
    </recommendedName>
</protein>
<sequence>MEQYEDKSGLLLVQLNQLSDNRSKKVLQGFVKDVLTYEKSKIGTQLTDSETELGVSKSLVQSSKQQNISSTYFLDLCNKHIINSEFTSSYLY</sequence>
<proteinExistence type="predicted"/>
<reference key="1">
    <citation type="journal article" date="2002" name="Nature">
        <title>Sequence and analysis of chromosome 2 of Dictyostelium discoideum.</title>
        <authorList>
            <person name="Gloeckner G."/>
            <person name="Eichinger L."/>
            <person name="Szafranski K."/>
            <person name="Pachebat J.A."/>
            <person name="Bankier A.T."/>
            <person name="Dear P.H."/>
            <person name="Lehmann R."/>
            <person name="Baumgart C."/>
            <person name="Parra G."/>
            <person name="Abril J.F."/>
            <person name="Guigo R."/>
            <person name="Kumpf K."/>
            <person name="Tunggal B."/>
            <person name="Cox E.C."/>
            <person name="Quail M.A."/>
            <person name="Platzer M."/>
            <person name="Rosenthal A."/>
            <person name="Noegel A.A."/>
        </authorList>
    </citation>
    <scope>NUCLEOTIDE SEQUENCE [LARGE SCALE GENOMIC DNA]</scope>
    <source>
        <strain>AX4</strain>
    </source>
</reference>
<reference key="2">
    <citation type="journal article" date="2005" name="Nature">
        <title>The genome of the social amoeba Dictyostelium discoideum.</title>
        <authorList>
            <person name="Eichinger L."/>
            <person name="Pachebat J.A."/>
            <person name="Gloeckner G."/>
            <person name="Rajandream M.A."/>
            <person name="Sucgang R."/>
            <person name="Berriman M."/>
            <person name="Song J."/>
            <person name="Olsen R."/>
            <person name="Szafranski K."/>
            <person name="Xu Q."/>
            <person name="Tunggal B."/>
            <person name="Kummerfeld S."/>
            <person name="Madera M."/>
            <person name="Konfortov B.A."/>
            <person name="Rivero F."/>
            <person name="Bankier A.T."/>
            <person name="Lehmann R."/>
            <person name="Hamlin N."/>
            <person name="Davies R."/>
            <person name="Gaudet P."/>
            <person name="Fey P."/>
            <person name="Pilcher K."/>
            <person name="Chen G."/>
            <person name="Saunders D."/>
            <person name="Sodergren E.J."/>
            <person name="Davis P."/>
            <person name="Kerhornou A."/>
            <person name="Nie X."/>
            <person name="Hall N."/>
            <person name="Anjard C."/>
            <person name="Hemphill L."/>
            <person name="Bason N."/>
            <person name="Farbrother P."/>
            <person name="Desany B."/>
            <person name="Just E."/>
            <person name="Morio T."/>
            <person name="Rost R."/>
            <person name="Churcher C.M."/>
            <person name="Cooper J."/>
            <person name="Haydock S."/>
            <person name="van Driessche N."/>
            <person name="Cronin A."/>
            <person name="Goodhead I."/>
            <person name="Muzny D.M."/>
            <person name="Mourier T."/>
            <person name="Pain A."/>
            <person name="Lu M."/>
            <person name="Harper D."/>
            <person name="Lindsay R."/>
            <person name="Hauser H."/>
            <person name="James K.D."/>
            <person name="Quiles M."/>
            <person name="Madan Babu M."/>
            <person name="Saito T."/>
            <person name="Buchrieser C."/>
            <person name="Wardroper A."/>
            <person name="Felder M."/>
            <person name="Thangavelu M."/>
            <person name="Johnson D."/>
            <person name="Knights A."/>
            <person name="Loulseged H."/>
            <person name="Mungall K.L."/>
            <person name="Oliver K."/>
            <person name="Price C."/>
            <person name="Quail M.A."/>
            <person name="Urushihara H."/>
            <person name="Hernandez J."/>
            <person name="Rabbinowitsch E."/>
            <person name="Steffen D."/>
            <person name="Sanders M."/>
            <person name="Ma J."/>
            <person name="Kohara Y."/>
            <person name="Sharp S."/>
            <person name="Simmonds M.N."/>
            <person name="Spiegler S."/>
            <person name="Tivey A."/>
            <person name="Sugano S."/>
            <person name="White B."/>
            <person name="Walker D."/>
            <person name="Woodward J.R."/>
            <person name="Winckler T."/>
            <person name="Tanaka Y."/>
            <person name="Shaulsky G."/>
            <person name="Schleicher M."/>
            <person name="Weinstock G.M."/>
            <person name="Rosenthal A."/>
            <person name="Cox E.C."/>
            <person name="Chisholm R.L."/>
            <person name="Gibbs R.A."/>
            <person name="Loomis W.F."/>
            <person name="Platzer M."/>
            <person name="Kay R.R."/>
            <person name="Williams J.G."/>
            <person name="Dear P.H."/>
            <person name="Noegel A.A."/>
            <person name="Barrell B.G."/>
            <person name="Kuspa A."/>
        </authorList>
    </citation>
    <scope>NUCLEOTIDE SEQUENCE [LARGE SCALE GENOMIC DNA]</scope>
    <source>
        <strain>AX4</strain>
    </source>
</reference>
<accession>Q75JD8</accession>
<accession>Q55AN9</accession>
<name>Y6909_DICDI</name>
<keyword id="KW-1185">Reference proteome</keyword>
<gene>
    <name type="ORF">DDB_G0271804</name>
</gene>
<dbReference type="EMBL" id="AAFI02000006">
    <property type="protein sequence ID" value="EAL71592.1"/>
    <property type="molecule type" value="Genomic_DNA"/>
</dbReference>
<dbReference type="RefSeq" id="XP_645483.1">
    <property type="nucleotide sequence ID" value="XM_640391.1"/>
</dbReference>
<dbReference type="PaxDb" id="44689-DDB0216909"/>
<dbReference type="EnsemblProtists" id="EAL71592">
    <property type="protein sequence ID" value="EAL71592"/>
    <property type="gene ID" value="DDB_G0271804"/>
</dbReference>
<dbReference type="GeneID" id="8618111"/>
<dbReference type="KEGG" id="ddi:DDB_G0271804"/>
<dbReference type="dictyBase" id="DDB_G0271804"/>
<dbReference type="VEuPathDB" id="AmoebaDB:DDB_G0271804"/>
<dbReference type="HOGENOM" id="CLU_2417800_0_0_1"/>
<dbReference type="InParanoid" id="Q75JD8"/>
<dbReference type="PRO" id="PR:Q75JD8"/>
<dbReference type="Proteomes" id="UP000002195">
    <property type="component" value="Chromosome 2"/>
</dbReference>
<feature type="chain" id="PRO_0000348112" description="Putative uncharacterized protein DDB_G0271804">
    <location>
        <begin position="1"/>
        <end position="92"/>
    </location>
</feature>
<organism>
    <name type="scientific">Dictyostelium discoideum</name>
    <name type="common">Social amoeba</name>
    <dbReference type="NCBI Taxonomy" id="44689"/>
    <lineage>
        <taxon>Eukaryota</taxon>
        <taxon>Amoebozoa</taxon>
        <taxon>Evosea</taxon>
        <taxon>Eumycetozoa</taxon>
        <taxon>Dictyostelia</taxon>
        <taxon>Dictyosteliales</taxon>
        <taxon>Dictyosteliaceae</taxon>
        <taxon>Dictyostelium</taxon>
    </lineage>
</organism>